<comment type="function">
    <text evidence="1">Multifunctional enzyme that converts the viral RNA genome into dsDNA in viral cytoplasmic capsids. This enzyme displays a DNA polymerase activity that can copy either DNA or RNA templates, and a ribonuclease H (RNase H) activity that cleaves the RNA strand of RNA-DNA heteroduplexes in a partially processive 3'- to 5'-endonucleasic mode. Neo-synthesized pregenomic RNA (pgRNA) are encapsidated together with the P protein, and reverse-transcribed inside the nucleocapsid. Initiation of reverse-transcription occurs first by binding the epsilon loop on the pgRNA genome, and is initiated by protein priming, thereby the 5'-end of (-)DNA is covalently linked to P protein. Partial (+)DNA is synthesized from the (-)DNA template and generates the relaxed circular DNA (RC-DNA) genome. After budding and infection, the RC-DNA migrates in the nucleus, and is converted into a plasmid-like covalently closed circular DNA (cccDNA). The activity of P protein does not seem to be necessary for cccDNA generation, and is presumably released from (+)DNA by host nuclear DNA repair machinery.</text>
</comment>
<comment type="catalytic activity">
    <reaction evidence="1">
        <text>DNA(n) + a 2'-deoxyribonucleoside 5'-triphosphate = DNA(n+1) + diphosphate</text>
        <dbReference type="Rhea" id="RHEA:22508"/>
        <dbReference type="Rhea" id="RHEA-COMP:17339"/>
        <dbReference type="Rhea" id="RHEA-COMP:17340"/>
        <dbReference type="ChEBI" id="CHEBI:33019"/>
        <dbReference type="ChEBI" id="CHEBI:61560"/>
        <dbReference type="ChEBI" id="CHEBI:173112"/>
        <dbReference type="EC" id="2.7.7.7"/>
    </reaction>
</comment>
<comment type="catalytic activity">
    <reaction evidence="1">
        <text>DNA(n) + a 2'-deoxyribonucleoside 5'-triphosphate = DNA(n+1) + diphosphate</text>
        <dbReference type="Rhea" id="RHEA:22508"/>
        <dbReference type="Rhea" id="RHEA-COMP:17339"/>
        <dbReference type="Rhea" id="RHEA-COMP:17340"/>
        <dbReference type="ChEBI" id="CHEBI:33019"/>
        <dbReference type="ChEBI" id="CHEBI:61560"/>
        <dbReference type="ChEBI" id="CHEBI:173112"/>
        <dbReference type="EC" id="2.7.7.49"/>
    </reaction>
</comment>
<comment type="catalytic activity">
    <reaction evidence="1">
        <text>Endonucleolytic cleavage to 5'-phosphomonoester.</text>
        <dbReference type="EC" id="3.1.26.4"/>
    </reaction>
</comment>
<comment type="activity regulation">
    <text evidence="1">Activated by host HSP70 and HSP40 in vitro to be able to bind the epsilon loop of the pgRNA. Because deletion of the RNase H region renders the protein partly chaperone-independent, the chaperones may be needed indirectly to relieve occlusion of the RNA-binding site by this domain. Inhibited by several reverse-transcriptase inhibitors: Lamivudine, Adefovir and Entecavir.</text>
</comment>
<comment type="domain">
    <text evidence="1">Terminal protein domain (TP) is hepadnavirus-specific. Spacer domain is highly variable and separates the TP and RT domains. Polymerase/reverse-transcriptase domain (RT) and ribonuclease H domain (RH) are similar to retrovirus reverse transcriptase/RNase H.</text>
</comment>
<comment type="domain">
    <text evidence="1">The polymerase/reverse transcriptase (RT) and ribonuclease H (RH) domains are structured in five subdomains: finger, palm, thumb, connection and RNase H. Within the palm subdomain, the 'primer grip' region is thought to be involved in the positioning of the primer terminus for accommodating the incoming nucleotide. The RH domain stabilizes the association of RT with primer-template.</text>
</comment>
<comment type="miscellaneous">
    <text evidence="1">Hepadnaviral virions contain probably just one P protein molecule per particle.</text>
</comment>
<comment type="similarity">
    <text evidence="1">Belongs to the hepadnaviridae P protein family.</text>
</comment>
<proteinExistence type="inferred from homology"/>
<reference key="1">
    <citation type="journal article" date="2000" name="J. Gen. Virol.">
        <title>A new genotype of hepatitis B virus: complete genome and phylogenetic relatedness.</title>
        <authorList>
            <person name="Stuyver L."/>
            <person name="De Gendt S."/>
            <person name="Van Geyt C."/>
            <person name="Zoulim F."/>
            <person name="Fried M."/>
            <person name="Schinazi R.F."/>
            <person name="Rossau R."/>
        </authorList>
    </citation>
    <scope>NUCLEOTIDE SEQUENCE [GENOMIC DNA]</scope>
</reference>
<reference key="2">
    <citation type="journal article" date="2007" name="World J. Gastroenterol.">
        <title>Hepatitis B virus replication.</title>
        <authorList>
            <person name="Beck J."/>
            <person name="Nassal M."/>
        </authorList>
    </citation>
    <scope>REVIEW</scope>
</reference>
<feature type="chain" id="PRO_0000323279" description="Protein P">
    <location>
        <begin position="1"/>
        <end position="842"/>
    </location>
</feature>
<feature type="domain" description="Reverse transcriptase" evidence="1">
    <location>
        <begin position="356"/>
        <end position="599"/>
    </location>
</feature>
<feature type="region of interest" description="Terminal protein domain (TP)" evidence="1">
    <location>
        <begin position="1"/>
        <end position="177"/>
    </location>
</feature>
<feature type="region of interest" description="Spacer" evidence="1">
    <location>
        <begin position="178"/>
        <end position="345"/>
    </location>
</feature>
<feature type="region of interest" description="Disordered" evidence="2">
    <location>
        <begin position="184"/>
        <end position="238"/>
    </location>
</feature>
<feature type="region of interest" description="Polymerase/reverse transcriptase domain (RT)" evidence="1">
    <location>
        <begin position="346"/>
        <end position="689"/>
    </location>
</feature>
<feature type="compositionally biased region" description="Low complexity" evidence="2">
    <location>
        <begin position="197"/>
        <end position="208"/>
    </location>
</feature>
<feature type="compositionally biased region" description="Polar residues" evidence="2">
    <location>
        <begin position="212"/>
        <end position="228"/>
    </location>
</feature>
<feature type="binding site" evidence="1">
    <location>
        <position position="428"/>
    </location>
    <ligand>
        <name>Mg(2+)</name>
        <dbReference type="ChEBI" id="CHEBI:18420"/>
        <note>catalytic</note>
    </ligand>
</feature>
<feature type="binding site" evidence="1">
    <location>
        <position position="550"/>
    </location>
    <ligand>
        <name>Mg(2+)</name>
        <dbReference type="ChEBI" id="CHEBI:18420"/>
        <note>catalytic</note>
    </ligand>
</feature>
<feature type="binding site" evidence="1">
    <location>
        <position position="551"/>
    </location>
    <ligand>
        <name>Mg(2+)</name>
        <dbReference type="ChEBI" id="CHEBI:18420"/>
        <note>catalytic</note>
    </ligand>
</feature>
<feature type="site" description="Priming of reverse-transcription by covalently linking the first nucleotide of the (-)DNA" evidence="1">
    <location>
        <position position="63"/>
    </location>
</feature>
<name>DPOL_HBVG3</name>
<evidence type="ECO:0000255" key="1">
    <source>
        <dbReference type="HAMAP-Rule" id="MF_04073"/>
    </source>
</evidence>
<evidence type="ECO:0000256" key="2">
    <source>
        <dbReference type="SAM" id="MobiDB-lite"/>
    </source>
</evidence>
<dbReference type="EC" id="2.7.7.7" evidence="1"/>
<dbReference type="EC" id="2.7.7.49" evidence="1"/>
<dbReference type="EC" id="3.1.26.4" evidence="1"/>
<dbReference type="EMBL" id="AF160501">
    <property type="protein sequence ID" value="AAF34734.1"/>
    <property type="molecule type" value="Genomic_DNA"/>
</dbReference>
<dbReference type="Proteomes" id="UP000007407">
    <property type="component" value="Segment"/>
</dbReference>
<dbReference type="GO" id="GO:0003677">
    <property type="term" value="F:DNA binding"/>
    <property type="evidence" value="ECO:0007669"/>
    <property type="project" value="UniProtKB-UniRule"/>
</dbReference>
<dbReference type="GO" id="GO:0003887">
    <property type="term" value="F:DNA-directed DNA polymerase activity"/>
    <property type="evidence" value="ECO:0007669"/>
    <property type="project" value="UniProtKB-UniRule"/>
</dbReference>
<dbReference type="GO" id="GO:0046872">
    <property type="term" value="F:metal ion binding"/>
    <property type="evidence" value="ECO:0007669"/>
    <property type="project" value="UniProtKB-UniRule"/>
</dbReference>
<dbReference type="GO" id="GO:0003964">
    <property type="term" value="F:RNA-directed DNA polymerase activity"/>
    <property type="evidence" value="ECO:0007669"/>
    <property type="project" value="UniProtKB-UniRule"/>
</dbReference>
<dbReference type="GO" id="GO:0004523">
    <property type="term" value="F:RNA-DNA hybrid ribonuclease activity"/>
    <property type="evidence" value="ECO:0007669"/>
    <property type="project" value="UniProtKB-UniRule"/>
</dbReference>
<dbReference type="GO" id="GO:0006260">
    <property type="term" value="P:DNA replication"/>
    <property type="evidence" value="ECO:0007669"/>
    <property type="project" value="UniProtKB-UniRule"/>
</dbReference>
<dbReference type="GO" id="GO:0052170">
    <property type="term" value="P:symbiont-mediated suppression of host innate immune response"/>
    <property type="evidence" value="ECO:0007669"/>
    <property type="project" value="UniProtKB-UniRule"/>
</dbReference>
<dbReference type="FunFam" id="3.30.70.270:FF:000009">
    <property type="entry name" value="Protein P"/>
    <property type="match status" value="1"/>
</dbReference>
<dbReference type="Gene3D" id="3.30.70.270">
    <property type="match status" value="1"/>
</dbReference>
<dbReference type="HAMAP" id="MF_04073">
    <property type="entry name" value="HBV_DPOL"/>
    <property type="match status" value="1"/>
</dbReference>
<dbReference type="InterPro" id="IPR043502">
    <property type="entry name" value="DNA/RNA_pol_sf"/>
</dbReference>
<dbReference type="InterPro" id="IPR001462">
    <property type="entry name" value="DNApol_viral_C"/>
</dbReference>
<dbReference type="InterPro" id="IPR000201">
    <property type="entry name" value="DNApol_viral_N"/>
</dbReference>
<dbReference type="InterPro" id="IPR037531">
    <property type="entry name" value="HBV_DPOL"/>
</dbReference>
<dbReference type="InterPro" id="IPR043128">
    <property type="entry name" value="Rev_trsase/Diguanyl_cyclase"/>
</dbReference>
<dbReference type="InterPro" id="IPR000477">
    <property type="entry name" value="RT_dom"/>
</dbReference>
<dbReference type="InterPro" id="IPR051320">
    <property type="entry name" value="Viral_Replic_Matur_Polypro"/>
</dbReference>
<dbReference type="PANTHER" id="PTHR33064">
    <property type="entry name" value="POL PROTEIN"/>
    <property type="match status" value="1"/>
</dbReference>
<dbReference type="PANTHER" id="PTHR33064:SF37">
    <property type="entry name" value="RIBONUCLEASE H"/>
    <property type="match status" value="1"/>
</dbReference>
<dbReference type="Pfam" id="PF00336">
    <property type="entry name" value="DNA_pol_viral_C"/>
    <property type="match status" value="1"/>
</dbReference>
<dbReference type="Pfam" id="PF00242">
    <property type="entry name" value="DNA_pol_viral_N"/>
    <property type="match status" value="1"/>
</dbReference>
<dbReference type="Pfam" id="PF00078">
    <property type="entry name" value="RVT_1"/>
    <property type="match status" value="1"/>
</dbReference>
<dbReference type="SUPFAM" id="SSF56672">
    <property type="entry name" value="DNA/RNA polymerases"/>
    <property type="match status" value="1"/>
</dbReference>
<dbReference type="PROSITE" id="PS50878">
    <property type="entry name" value="RT_POL"/>
    <property type="match status" value="1"/>
</dbReference>
<accession>Q9IBI4</accession>
<protein>
    <recommendedName>
        <fullName evidence="1">Protein P</fullName>
    </recommendedName>
    <domain>
        <recommendedName>
            <fullName evidence="1">DNA-directed DNA polymerase</fullName>
            <ecNumber evidence="1">2.7.7.7</ecNumber>
        </recommendedName>
    </domain>
    <domain>
        <recommendedName>
            <fullName evidence="1">RNA-directed DNA polymerase</fullName>
            <ecNumber evidence="1">2.7.7.49</ecNumber>
        </recommendedName>
    </domain>
    <domain>
        <recommendedName>
            <fullName evidence="1">Ribonuclease H</fullName>
            <ecNumber evidence="1">3.1.26.4</ecNumber>
        </recommendedName>
    </domain>
</protein>
<sequence>MPLSYQHFRRLLLLDEEAGPLEEELPRLADEDLNRRVAEDLHLQLPNVSIPWTHKVGNFTGLYSSTIPVFNPDWQTPSFPNIHLHQDIITKCEQFVGPLTVNEKRRLKLVMPARFFPNSTKYLPLDKGIKPYYPENVVNHYFQTRHYLHTLWKAGILYKRETSRSASFCGSPYTWEQDLQHGAFLDGPSRVGKEPFRQQSSRIPSRSPVGPSIQSKYQQSRLGLQSQKGPLARGQQGRSWSLWTRVHPSTRRPFGVEPSVSGHTNNFASRSASCLHQSSVREAAYSHLSTTKRQSSSGHAVELYSIPPSSTKSQSQGPVFSCWWLQFRDSEPCSDYCLSHLVNLLQDWGPCTEHGEHHIRIPRTPARVTGGVFLVDKNPHNTAESRLVVDFSQFSRGSARVSWPKFAVPNLQSLTNLLSSNLSWLSLDVSAAFYHIPLHPAAMPHLLVGSSGLSRYVARLSSDSRILDHQYGTLQNLHDSCSRQLYVSLMLLYKTFGRKLHLYSHPIILGFRKIPMGVGLSPFLLAQFTSAICSVVRRAFPHCLAFSYMDDVVLGAKSVQHLESLYTAVTNFLLSLGIHLNPNKTKRWGYSLNFMGYVIGSWGTLPQEHITQKIKQCFRKLPVNRPIDWKVCQRITGLLGFAAPFTQCGYPALMPLYACIQAKQAFTFSPTYKAFLCKQYMNLYPVARQRPGLCQVFADATPTGWGLAIGHQRMRGTFVAPLPIHTAELLAACFARSRSGAKLIGTDNSVVLSRKYTSFPWLLGCAANWILRGTSFVYVPSALNPADDPSRGRLGLCRPLLRLPFLPTTGRTSLYAVSPSVPSHLPDRVHFASPLHVTWKPP</sequence>
<gene>
    <name evidence="1" type="primary">P</name>
</gene>
<organism>
    <name type="scientific">Hepatitis B virus genotype G (isolate IG29227/2000)</name>
    <name type="common">HBV-G</name>
    <dbReference type="NCBI Taxonomy" id="489538"/>
    <lineage>
        <taxon>Viruses</taxon>
        <taxon>Riboviria</taxon>
        <taxon>Pararnavirae</taxon>
        <taxon>Artverviricota</taxon>
        <taxon>Revtraviricetes</taxon>
        <taxon>Blubervirales</taxon>
        <taxon>Hepadnaviridae</taxon>
        <taxon>Orthohepadnavirus</taxon>
        <taxon>Hepatitis B virus</taxon>
        <taxon>hepatitis B virus genotype G</taxon>
    </lineage>
</organism>
<organismHost>
    <name type="scientific">Homo sapiens</name>
    <name type="common">Human</name>
    <dbReference type="NCBI Taxonomy" id="9606"/>
</organismHost>
<organismHost>
    <name type="scientific">Pan troglodytes</name>
    <name type="common">Chimpanzee</name>
    <dbReference type="NCBI Taxonomy" id="9598"/>
</organismHost>
<keyword id="KW-0235">DNA replication</keyword>
<keyword id="KW-0238">DNA-binding</keyword>
<keyword id="KW-0239">DNA-directed DNA polymerase</keyword>
<keyword id="KW-0255">Endonuclease</keyword>
<keyword id="KW-0945">Host-virus interaction</keyword>
<keyword id="KW-0378">Hydrolase</keyword>
<keyword id="KW-1090">Inhibition of host innate immune response by virus</keyword>
<keyword id="KW-1113">Inhibition of host RLR pathway by virus</keyword>
<keyword id="KW-0460">Magnesium</keyword>
<keyword id="KW-0479">Metal-binding</keyword>
<keyword id="KW-0511">Multifunctional enzyme</keyword>
<keyword id="KW-0540">Nuclease</keyword>
<keyword id="KW-0548">Nucleotidyltransferase</keyword>
<keyword id="KW-0695">RNA-directed DNA polymerase</keyword>
<keyword id="KW-0808">Transferase</keyword>
<keyword id="KW-0899">Viral immunoevasion</keyword>